<gene>
    <name evidence="1" type="primary">rpsG</name>
    <name type="ordered locus">MRA_0692</name>
</gene>
<keyword id="KW-1185">Reference proteome</keyword>
<keyword id="KW-0687">Ribonucleoprotein</keyword>
<keyword id="KW-0689">Ribosomal protein</keyword>
<keyword id="KW-0694">RNA-binding</keyword>
<keyword id="KW-0699">rRNA-binding</keyword>
<keyword id="KW-0820">tRNA-binding</keyword>
<name>RS7_MYCTA</name>
<organism>
    <name type="scientific">Mycobacterium tuberculosis (strain ATCC 25177 / H37Ra)</name>
    <dbReference type="NCBI Taxonomy" id="419947"/>
    <lineage>
        <taxon>Bacteria</taxon>
        <taxon>Bacillati</taxon>
        <taxon>Actinomycetota</taxon>
        <taxon>Actinomycetes</taxon>
        <taxon>Mycobacteriales</taxon>
        <taxon>Mycobacteriaceae</taxon>
        <taxon>Mycobacterium</taxon>
        <taxon>Mycobacterium tuberculosis complex</taxon>
    </lineage>
</organism>
<reference key="1">
    <citation type="journal article" date="2008" name="PLoS ONE">
        <title>Genetic basis of virulence attenuation revealed by comparative genomic analysis of Mycobacterium tuberculosis strain H37Ra versus H37Rv.</title>
        <authorList>
            <person name="Zheng H."/>
            <person name="Lu L."/>
            <person name="Wang B."/>
            <person name="Pu S."/>
            <person name="Zhang X."/>
            <person name="Zhu G."/>
            <person name="Shi W."/>
            <person name="Zhang L."/>
            <person name="Wang H."/>
            <person name="Wang S."/>
            <person name="Zhao G."/>
            <person name="Zhang Y."/>
        </authorList>
    </citation>
    <scope>NUCLEOTIDE SEQUENCE [LARGE SCALE GENOMIC DNA]</scope>
    <source>
        <strain>ATCC 25177 / H37Ra</strain>
    </source>
</reference>
<accession>A5U069</accession>
<dbReference type="EMBL" id="CP000611">
    <property type="protein sequence ID" value="ABQ72419.1"/>
    <property type="molecule type" value="Genomic_DNA"/>
</dbReference>
<dbReference type="RefSeq" id="WP_003403456.1">
    <property type="nucleotide sequence ID" value="NZ_CP016972.1"/>
</dbReference>
<dbReference type="SMR" id="A5U069"/>
<dbReference type="GeneID" id="45424645"/>
<dbReference type="KEGG" id="mra:MRA_0692"/>
<dbReference type="eggNOG" id="COG0049">
    <property type="taxonomic scope" value="Bacteria"/>
</dbReference>
<dbReference type="HOGENOM" id="CLU_072226_1_1_11"/>
<dbReference type="Proteomes" id="UP000001988">
    <property type="component" value="Chromosome"/>
</dbReference>
<dbReference type="GO" id="GO:0015935">
    <property type="term" value="C:small ribosomal subunit"/>
    <property type="evidence" value="ECO:0007669"/>
    <property type="project" value="InterPro"/>
</dbReference>
<dbReference type="GO" id="GO:0019843">
    <property type="term" value="F:rRNA binding"/>
    <property type="evidence" value="ECO:0007669"/>
    <property type="project" value="UniProtKB-UniRule"/>
</dbReference>
<dbReference type="GO" id="GO:0003735">
    <property type="term" value="F:structural constituent of ribosome"/>
    <property type="evidence" value="ECO:0007669"/>
    <property type="project" value="InterPro"/>
</dbReference>
<dbReference type="GO" id="GO:0000049">
    <property type="term" value="F:tRNA binding"/>
    <property type="evidence" value="ECO:0007669"/>
    <property type="project" value="UniProtKB-UniRule"/>
</dbReference>
<dbReference type="GO" id="GO:0006412">
    <property type="term" value="P:translation"/>
    <property type="evidence" value="ECO:0007669"/>
    <property type="project" value="UniProtKB-UniRule"/>
</dbReference>
<dbReference type="CDD" id="cd14869">
    <property type="entry name" value="uS7_Bacteria"/>
    <property type="match status" value="1"/>
</dbReference>
<dbReference type="FunFam" id="1.10.455.10:FF:000001">
    <property type="entry name" value="30S ribosomal protein S7"/>
    <property type="match status" value="1"/>
</dbReference>
<dbReference type="Gene3D" id="1.10.455.10">
    <property type="entry name" value="Ribosomal protein S7 domain"/>
    <property type="match status" value="1"/>
</dbReference>
<dbReference type="HAMAP" id="MF_00480_B">
    <property type="entry name" value="Ribosomal_uS7_B"/>
    <property type="match status" value="1"/>
</dbReference>
<dbReference type="InterPro" id="IPR000235">
    <property type="entry name" value="Ribosomal_uS7"/>
</dbReference>
<dbReference type="InterPro" id="IPR005717">
    <property type="entry name" value="Ribosomal_uS7_bac/org-type"/>
</dbReference>
<dbReference type="InterPro" id="IPR020606">
    <property type="entry name" value="Ribosomal_uS7_CS"/>
</dbReference>
<dbReference type="InterPro" id="IPR023798">
    <property type="entry name" value="Ribosomal_uS7_dom"/>
</dbReference>
<dbReference type="InterPro" id="IPR036823">
    <property type="entry name" value="Ribosomal_uS7_dom_sf"/>
</dbReference>
<dbReference type="NCBIfam" id="TIGR01029">
    <property type="entry name" value="rpsG_bact"/>
    <property type="match status" value="1"/>
</dbReference>
<dbReference type="PANTHER" id="PTHR11205">
    <property type="entry name" value="RIBOSOMAL PROTEIN S7"/>
    <property type="match status" value="1"/>
</dbReference>
<dbReference type="Pfam" id="PF00177">
    <property type="entry name" value="Ribosomal_S7"/>
    <property type="match status" value="1"/>
</dbReference>
<dbReference type="PIRSF" id="PIRSF002122">
    <property type="entry name" value="RPS7p_RPS7a_RPS5e_RPS7o"/>
    <property type="match status" value="1"/>
</dbReference>
<dbReference type="SUPFAM" id="SSF47973">
    <property type="entry name" value="Ribosomal protein S7"/>
    <property type="match status" value="1"/>
</dbReference>
<dbReference type="PROSITE" id="PS00052">
    <property type="entry name" value="RIBOSOMAL_S7"/>
    <property type="match status" value="1"/>
</dbReference>
<sequence>MPRKGPAPKRPLVNDPVYGSQLVTQLVNKVLLKGKKSLAERIVYGALEQARDKTGTDPVITLKRALDNVKPALEVRSRRVGGATYQVPVEVRPDRSTTLALRWLVGYSRQRREKTMIERLANEILDASNGLGASVKRREDTHKMAEANRAFAHYRW</sequence>
<proteinExistence type="inferred from homology"/>
<comment type="function">
    <text evidence="1">One of the primary rRNA binding proteins, it binds directly to 16S rRNA where it nucleates assembly of the head domain of the 30S subunit. Is located at the subunit interface close to the decoding center, probably blocks exit of the E-site tRNA.</text>
</comment>
<comment type="subunit">
    <text evidence="1">Part of the 30S ribosomal subunit. Contacts proteins S9 and S11.</text>
</comment>
<comment type="similarity">
    <text evidence="1">Belongs to the universal ribosomal protein uS7 family.</text>
</comment>
<feature type="chain" id="PRO_1000014238" description="Small ribosomal subunit protein uS7">
    <location>
        <begin position="1"/>
        <end position="156"/>
    </location>
</feature>
<protein>
    <recommendedName>
        <fullName evidence="1">Small ribosomal subunit protein uS7</fullName>
    </recommendedName>
    <alternativeName>
        <fullName evidence="2">30S ribosomal protein S7</fullName>
    </alternativeName>
</protein>
<evidence type="ECO:0000255" key="1">
    <source>
        <dbReference type="HAMAP-Rule" id="MF_00480"/>
    </source>
</evidence>
<evidence type="ECO:0000305" key="2"/>